<evidence type="ECO:0000250" key="1"/>
<evidence type="ECO:0000250" key="2">
    <source>
        <dbReference type="UniProtKB" id="P29074"/>
    </source>
</evidence>
<evidence type="ECO:0000255" key="3">
    <source>
        <dbReference type="PROSITE-ProRule" id="PRU00084"/>
    </source>
</evidence>
<evidence type="ECO:0000255" key="4">
    <source>
        <dbReference type="PROSITE-ProRule" id="PRU00143"/>
    </source>
</evidence>
<evidence type="ECO:0000255" key="5">
    <source>
        <dbReference type="PROSITE-ProRule" id="PRU00160"/>
    </source>
</evidence>
<evidence type="ECO:0000255" key="6">
    <source>
        <dbReference type="PROSITE-ProRule" id="PRU10044"/>
    </source>
</evidence>
<evidence type="ECO:0000256" key="7">
    <source>
        <dbReference type="SAM" id="MobiDB-lite"/>
    </source>
</evidence>
<evidence type="ECO:0000269" key="8">
    <source>
    </source>
</evidence>
<evidence type="ECO:0000269" key="9">
    <source>
    </source>
</evidence>
<evidence type="ECO:0000269" key="10">
    <source>
    </source>
</evidence>
<evidence type="ECO:0000269" key="11">
    <source>
    </source>
</evidence>
<evidence type="ECO:0000305" key="12"/>
<evidence type="ECO:0007744" key="13">
    <source>
    </source>
</evidence>
<keyword id="KW-1003">Cell membrane</keyword>
<keyword id="KW-0963">Cytoplasm</keyword>
<keyword id="KW-0206">Cytoskeleton</keyword>
<keyword id="KW-0378">Hydrolase</keyword>
<keyword id="KW-0472">Membrane</keyword>
<keyword id="KW-0597">Phosphoprotein</keyword>
<keyword id="KW-0904">Protein phosphatase</keyword>
<keyword id="KW-1185">Reference proteome</keyword>
<protein>
    <recommendedName>
        <fullName>Tyrosine-protein phosphatase non-receptor type 4</fullName>
        <ecNumber>3.1.3.48</ecNumber>
    </recommendedName>
    <alternativeName>
        <fullName>Testis-enriched protein tyrosine phosphatase</fullName>
    </alternativeName>
</protein>
<reference key="1">
    <citation type="journal article" date="2000" name="Gene">
        <title>Molecular cloning and characterization of a protein tyrosine phosphatase enriched in testis, a putative murine homologue of human PTPMEG.</title>
        <authorList>
            <person name="Park K.-W."/>
            <person name="Lee E.-J."/>
            <person name="Lee S.-H."/>
            <person name="Lee J.-E."/>
            <person name="Choi E.-Y."/>
            <person name="Kim B.J."/>
            <person name="Hwang R."/>
            <person name="Park K.A."/>
            <person name="Baik J.-H."/>
        </authorList>
    </citation>
    <scope>NUCLEOTIDE SEQUENCE [MRNA]</scope>
    <scope>TISSUE SPECIFICITY</scope>
    <source>
        <tissue>Testis</tissue>
    </source>
</reference>
<reference key="2">
    <citation type="journal article" date="2009" name="PLoS Biol.">
        <title>Lineage-specific biology revealed by a finished genome assembly of the mouse.</title>
        <authorList>
            <person name="Church D.M."/>
            <person name="Goodstadt L."/>
            <person name="Hillier L.W."/>
            <person name="Zody M.C."/>
            <person name="Goldstein S."/>
            <person name="She X."/>
            <person name="Bult C.J."/>
            <person name="Agarwala R."/>
            <person name="Cherry J.L."/>
            <person name="DiCuccio M."/>
            <person name="Hlavina W."/>
            <person name="Kapustin Y."/>
            <person name="Meric P."/>
            <person name="Maglott D."/>
            <person name="Birtle Z."/>
            <person name="Marques A.C."/>
            <person name="Graves T."/>
            <person name="Zhou S."/>
            <person name="Teague B."/>
            <person name="Potamousis K."/>
            <person name="Churas C."/>
            <person name="Place M."/>
            <person name="Herschleb J."/>
            <person name="Runnheim R."/>
            <person name="Forrest D."/>
            <person name="Amos-Landgraf J."/>
            <person name="Schwartz D.C."/>
            <person name="Cheng Z."/>
            <person name="Lindblad-Toh K."/>
            <person name="Eichler E.E."/>
            <person name="Ponting C.P."/>
        </authorList>
    </citation>
    <scope>NUCLEOTIDE SEQUENCE [LARGE SCALE GENOMIC DNA]</scope>
    <source>
        <strain>C57BL/6J</strain>
    </source>
</reference>
<reference key="3">
    <citation type="submission" date="2005-07" db="EMBL/GenBank/DDBJ databases">
        <authorList>
            <person name="Mural R.J."/>
            <person name="Adams M.D."/>
            <person name="Myers E.W."/>
            <person name="Smith H.O."/>
            <person name="Venter J.C."/>
        </authorList>
    </citation>
    <scope>NUCLEOTIDE SEQUENCE [LARGE SCALE GENOMIC DNA]</scope>
</reference>
<reference key="4">
    <citation type="journal article" date="2007" name="Eur. J. Neurosci.">
        <title>Involvement of protein-tyrosine phosphatase PTPMEG in motor learning and cerebellar long-term depression.</title>
        <authorList>
            <person name="Kina S."/>
            <person name="Tezuka T."/>
            <person name="Kusakawa S."/>
            <person name="Kishimoto Y."/>
            <person name="Kakizawa S."/>
            <person name="Hashimoto K."/>
            <person name="Ohsugi M."/>
            <person name="Kiyama Y."/>
            <person name="Horai R."/>
            <person name="Sudo K."/>
            <person name="Kakuta S."/>
            <person name="Iwakura Y."/>
            <person name="Iino M."/>
            <person name="Kano M."/>
            <person name="Manabe T."/>
            <person name="Yamamoto T."/>
        </authorList>
    </citation>
    <scope>FUNCTION</scope>
    <scope>DISRUPTION PHENOTYPE</scope>
</reference>
<reference key="5">
    <citation type="journal article" date="2008" name="Mol. Immunol.">
        <title>The protein tyrosine phosphatase PTPN4/PTP-MEG1, an enzyme capable of dephosphorylating the TCR ITAMs and regulating NF-kappaB, is dispensable for T cell development and/or T cell effector functions.</title>
        <authorList>
            <person name="Young J.A."/>
            <person name="Becker A.M."/>
            <person name="Medeiros J.J."/>
            <person name="Shapiro V.S."/>
            <person name="Wang A."/>
            <person name="Farrar J.D."/>
            <person name="Quill T.A."/>
            <person name="Hooft van Huijsduijnen R."/>
            <person name="van Oers N.S."/>
        </authorList>
    </citation>
    <scope>FUNCTION</scope>
    <scope>DISRUPTION PHENOTYPE</scope>
</reference>
<reference key="6">
    <citation type="journal article" date="2010" name="Cell">
        <title>A tissue-specific atlas of mouse protein phosphorylation and expression.</title>
        <authorList>
            <person name="Huttlin E.L."/>
            <person name="Jedrychowski M.P."/>
            <person name="Elias J.E."/>
            <person name="Goswami T."/>
            <person name="Rad R."/>
            <person name="Beausoleil S.A."/>
            <person name="Villen J."/>
            <person name="Haas W."/>
            <person name="Sowa M.E."/>
            <person name="Gygi S.P."/>
        </authorList>
    </citation>
    <scope>PHOSPHORYLATION [LARGE SCALE ANALYSIS] AT SER-474</scope>
    <scope>IDENTIFICATION BY MASS SPECTROMETRY [LARGE SCALE ANALYSIS]</scope>
    <source>
        <tissue>Brown adipose tissue</tissue>
    </source>
</reference>
<reference key="7">
    <citation type="journal article" date="2015" name="J. Immunol.">
        <title>Phosphatase PTPN4 preferentially inhibits TRIF-dependent TLR4 pathway by dephosphorylating TRAM.</title>
        <authorList>
            <person name="Huai W."/>
            <person name="Song H."/>
            <person name="Wang L."/>
            <person name="Li B."/>
            <person name="Zhao J."/>
            <person name="Han L."/>
            <person name="Gao C."/>
            <person name="Jiang G."/>
            <person name="Zhang L."/>
            <person name="Zhao W."/>
        </authorList>
    </citation>
    <scope>FUNCTION</scope>
</reference>
<name>PTN4_MOUSE</name>
<comment type="function">
    <text evidence="1 2 9 10 11">Phosphatase that plays a role in immunity, learning, synaptic plasticity or cell homeostasis (PubMed:17953619, PubMed:25825441). Regulates neuronal cell homeostasis by protecting neurons against apoptosis (By similarity). Negatively regulates TLR4-induced interferon beta production by dephosphorylating adapter TICAM2 and inhibiting subsequent TRAM-TRIF interaction (PubMed:25825441). Dephosphorylates also the immunoreceptor tyrosine-based activation motifs/ITAMs of the TCR zeta subunit and thereby negatively regulates TCR-mediated signaling pathway (PubMed:18614237). May act at junctions between the membrane and the cytoskeleton.</text>
</comment>
<comment type="catalytic activity">
    <reaction evidence="6">
        <text>O-phospho-L-tyrosyl-[protein] + H2O = L-tyrosyl-[protein] + phosphate</text>
        <dbReference type="Rhea" id="RHEA:10684"/>
        <dbReference type="Rhea" id="RHEA-COMP:10136"/>
        <dbReference type="Rhea" id="RHEA-COMP:20101"/>
        <dbReference type="ChEBI" id="CHEBI:15377"/>
        <dbReference type="ChEBI" id="CHEBI:43474"/>
        <dbReference type="ChEBI" id="CHEBI:46858"/>
        <dbReference type="ChEBI" id="CHEBI:61978"/>
        <dbReference type="EC" id="3.1.3.48"/>
    </reaction>
</comment>
<comment type="interaction">
    <interactant intactId="EBI-7249866">
        <id>Q9WU22</id>
    </interactant>
    <interactant intactId="EBI-7803400">
        <id>P24161</id>
        <label>Cd247</label>
    </interactant>
    <organismsDiffer>false</organismsDiffer>
    <experiments>3</experiments>
</comment>
<comment type="subcellular location">
    <subcellularLocation>
        <location evidence="1">Cell membrane</location>
        <topology evidence="1">Peripheral membrane protein</topology>
        <orientation evidence="1">Cytoplasmic side</orientation>
    </subcellularLocation>
    <subcellularLocation>
        <location evidence="1">Cytoplasm</location>
        <location evidence="1">Cytoskeleton</location>
    </subcellularLocation>
</comment>
<comment type="tissue specificity">
    <text evidence="8">Highly expressed in testis. Specifically expressed in spermatocytes and spermatids within seminiferous tubules (at protein level).</text>
</comment>
<comment type="disruption phenotype">
    <text evidence="9 10">PTPN4-deficient mice are born at normal Mendelian ratio with no apparent developmental or phenotypic defects. They display normal cytokine production and T-cell effector functions (PubMed:18614237). However, they show impairment in motor learning and cerebellar long-term depression (PubMed:17953619).</text>
</comment>
<comment type="similarity">
    <text evidence="12">Belongs to the protein-tyrosine phosphatase family. Non-receptor class subfamily.</text>
</comment>
<dbReference type="EC" id="3.1.3.48"/>
<dbReference type="EMBL" id="AF106702">
    <property type="protein sequence ID" value="AAD22773.1"/>
    <property type="molecule type" value="mRNA"/>
</dbReference>
<dbReference type="EMBL" id="AC123955">
    <property type="status" value="NOT_ANNOTATED_CDS"/>
    <property type="molecule type" value="Genomic_DNA"/>
</dbReference>
<dbReference type="EMBL" id="AC124760">
    <property type="status" value="NOT_ANNOTATED_CDS"/>
    <property type="molecule type" value="Genomic_DNA"/>
</dbReference>
<dbReference type="EMBL" id="CH466520">
    <property type="protein sequence ID" value="EDL39812.1"/>
    <property type="molecule type" value="Genomic_DNA"/>
</dbReference>
<dbReference type="CCDS" id="CCDS15227.1"/>
<dbReference type="RefSeq" id="NP_064317.2">
    <property type="nucleotide sequence ID" value="NM_019933.2"/>
</dbReference>
<dbReference type="SMR" id="Q9WU22"/>
<dbReference type="BioGRID" id="202487">
    <property type="interactions" value="5"/>
</dbReference>
<dbReference type="FunCoup" id="Q9WU22">
    <property type="interactions" value="2114"/>
</dbReference>
<dbReference type="IntAct" id="Q9WU22">
    <property type="interactions" value="1"/>
</dbReference>
<dbReference type="MINT" id="Q9WU22"/>
<dbReference type="STRING" id="10090.ENSMUSP00000067614"/>
<dbReference type="GlyGen" id="Q9WU22">
    <property type="glycosylation" value="2 sites"/>
</dbReference>
<dbReference type="iPTMnet" id="Q9WU22"/>
<dbReference type="PhosphoSitePlus" id="Q9WU22"/>
<dbReference type="SwissPalm" id="Q9WU22"/>
<dbReference type="PaxDb" id="10090-ENSMUSP00000067614"/>
<dbReference type="PeptideAtlas" id="Q9WU22"/>
<dbReference type="ProteomicsDB" id="301941"/>
<dbReference type="Antibodypedia" id="18333">
    <property type="antibodies" value="138 antibodies from 22 providers"/>
</dbReference>
<dbReference type="DNASU" id="19258"/>
<dbReference type="Ensembl" id="ENSMUST00000064091.12">
    <property type="protein sequence ID" value="ENSMUSP00000067614.6"/>
    <property type="gene ID" value="ENSMUSG00000026384.14"/>
</dbReference>
<dbReference type="GeneID" id="19258"/>
<dbReference type="KEGG" id="mmu:19258"/>
<dbReference type="UCSC" id="uc007ciz.1">
    <property type="organism name" value="mouse"/>
</dbReference>
<dbReference type="AGR" id="MGI:1099792"/>
<dbReference type="CTD" id="5775"/>
<dbReference type="MGI" id="MGI:1099792">
    <property type="gene designation" value="Ptpn4"/>
</dbReference>
<dbReference type="VEuPathDB" id="HostDB:ENSMUSG00000026384"/>
<dbReference type="eggNOG" id="KOG0792">
    <property type="taxonomic scope" value="Eukaryota"/>
</dbReference>
<dbReference type="GeneTree" id="ENSGT00940000157211"/>
<dbReference type="HOGENOM" id="CLU_001645_7_0_1"/>
<dbReference type="InParanoid" id="Q9WU22"/>
<dbReference type="OMA" id="MIRECRH"/>
<dbReference type="OrthoDB" id="5854685at2759"/>
<dbReference type="PhylomeDB" id="Q9WU22"/>
<dbReference type="TreeFam" id="TF315900"/>
<dbReference type="Reactome" id="R-MMU-166016">
    <property type="pathway name" value="Toll Like Receptor 4 (TLR4) Cascade"/>
</dbReference>
<dbReference type="BioGRID-ORCS" id="19258">
    <property type="hits" value="3 hits in 77 CRISPR screens"/>
</dbReference>
<dbReference type="ChiTaRS" id="Ptpn4">
    <property type="organism name" value="mouse"/>
</dbReference>
<dbReference type="PRO" id="PR:Q9WU22"/>
<dbReference type="Proteomes" id="UP000000589">
    <property type="component" value="Chromosome 1"/>
</dbReference>
<dbReference type="RNAct" id="Q9WU22">
    <property type="molecule type" value="protein"/>
</dbReference>
<dbReference type="Bgee" id="ENSMUSG00000026384">
    <property type="expression patterns" value="Expressed in lateral geniculate body and 223 other cell types or tissues"/>
</dbReference>
<dbReference type="ExpressionAtlas" id="Q9WU22">
    <property type="expression patterns" value="baseline and differential"/>
</dbReference>
<dbReference type="GO" id="GO:0005737">
    <property type="term" value="C:cytoplasm"/>
    <property type="evidence" value="ECO:0007669"/>
    <property type="project" value="UniProtKB-KW"/>
</dbReference>
<dbReference type="GO" id="GO:0009898">
    <property type="term" value="C:cytoplasmic side of plasma membrane"/>
    <property type="evidence" value="ECO:0007669"/>
    <property type="project" value="Ensembl"/>
</dbReference>
<dbReference type="GO" id="GO:0005856">
    <property type="term" value="C:cytoskeleton"/>
    <property type="evidence" value="ECO:0007669"/>
    <property type="project" value="UniProtKB-SubCell"/>
</dbReference>
<dbReference type="GO" id="GO:0016020">
    <property type="term" value="C:membrane"/>
    <property type="evidence" value="ECO:0000314"/>
    <property type="project" value="MGI"/>
</dbReference>
<dbReference type="GO" id="GO:0008092">
    <property type="term" value="F:cytoskeletal protein binding"/>
    <property type="evidence" value="ECO:0007669"/>
    <property type="project" value="InterPro"/>
</dbReference>
<dbReference type="GO" id="GO:0035254">
    <property type="term" value="F:glutamate receptor binding"/>
    <property type="evidence" value="ECO:0000353"/>
    <property type="project" value="MGI"/>
</dbReference>
<dbReference type="GO" id="GO:0004726">
    <property type="term" value="F:non-membrane spanning protein tyrosine phosphatase activity"/>
    <property type="evidence" value="ECO:0000314"/>
    <property type="project" value="MGI"/>
</dbReference>
<dbReference type="CDD" id="cd14473">
    <property type="entry name" value="FERM_B-lobe"/>
    <property type="match status" value="1"/>
</dbReference>
<dbReference type="CDD" id="cd13189">
    <property type="entry name" value="FERM_C_PTPN4_PTPN3_like"/>
    <property type="match status" value="1"/>
</dbReference>
<dbReference type="CDD" id="cd17194">
    <property type="entry name" value="FERM_F1_PTPN4"/>
    <property type="match status" value="1"/>
</dbReference>
<dbReference type="CDD" id="cd06706">
    <property type="entry name" value="PDZ_PTPN3-4-like"/>
    <property type="match status" value="1"/>
</dbReference>
<dbReference type="FunFam" id="2.30.29.30:FF:000002">
    <property type="entry name" value="Band 4.1-like protein 5 isoform 1"/>
    <property type="match status" value="1"/>
</dbReference>
<dbReference type="FunFam" id="2.30.42.10:FF:000045">
    <property type="entry name" value="Tyrosine-protein phosphatase non-receptor type"/>
    <property type="match status" value="1"/>
</dbReference>
<dbReference type="FunFam" id="3.10.20.90:FF:000104">
    <property type="entry name" value="Tyrosine-protein phosphatase non-receptor type"/>
    <property type="match status" value="1"/>
</dbReference>
<dbReference type="FunFam" id="3.90.190.10:FF:000023">
    <property type="entry name" value="Tyrosine-protein phosphatase non-receptor type"/>
    <property type="match status" value="1"/>
</dbReference>
<dbReference type="FunFam" id="1.20.80.10:FF:000003">
    <property type="entry name" value="Tyrosine-protein phosphatase non-receptor type 4"/>
    <property type="match status" value="1"/>
</dbReference>
<dbReference type="Gene3D" id="1.20.80.10">
    <property type="match status" value="1"/>
</dbReference>
<dbReference type="Gene3D" id="2.30.42.10">
    <property type="match status" value="1"/>
</dbReference>
<dbReference type="Gene3D" id="3.10.20.90">
    <property type="entry name" value="Phosphatidylinositol 3-kinase Catalytic Subunit, Chain A, domain 1"/>
    <property type="match status" value="1"/>
</dbReference>
<dbReference type="Gene3D" id="2.30.29.30">
    <property type="entry name" value="Pleckstrin-homology domain (PH domain)/Phosphotyrosine-binding domain (PTB)"/>
    <property type="match status" value="1"/>
</dbReference>
<dbReference type="Gene3D" id="3.90.190.10">
    <property type="entry name" value="Protein tyrosine phosphatase superfamily"/>
    <property type="match status" value="1"/>
</dbReference>
<dbReference type="InterPro" id="IPR019749">
    <property type="entry name" value="Band_41_domain"/>
</dbReference>
<dbReference type="InterPro" id="IPR014847">
    <property type="entry name" value="FA"/>
</dbReference>
<dbReference type="InterPro" id="IPR014352">
    <property type="entry name" value="FERM/acyl-CoA-bd_prot_sf"/>
</dbReference>
<dbReference type="InterPro" id="IPR035963">
    <property type="entry name" value="FERM_2"/>
</dbReference>
<dbReference type="InterPro" id="IPR019748">
    <property type="entry name" value="FERM_central"/>
</dbReference>
<dbReference type="InterPro" id="IPR019747">
    <property type="entry name" value="FERM_CS"/>
</dbReference>
<dbReference type="InterPro" id="IPR000299">
    <property type="entry name" value="FERM_domain"/>
</dbReference>
<dbReference type="InterPro" id="IPR018979">
    <property type="entry name" value="FERM_N"/>
</dbReference>
<dbReference type="InterPro" id="IPR018980">
    <property type="entry name" value="FERM_PH-like_C"/>
</dbReference>
<dbReference type="InterPro" id="IPR001478">
    <property type="entry name" value="PDZ"/>
</dbReference>
<dbReference type="InterPro" id="IPR036034">
    <property type="entry name" value="PDZ_sf"/>
</dbReference>
<dbReference type="InterPro" id="IPR011993">
    <property type="entry name" value="PH-like_dom_sf"/>
</dbReference>
<dbReference type="InterPro" id="IPR029021">
    <property type="entry name" value="Prot-tyrosine_phosphatase-like"/>
</dbReference>
<dbReference type="InterPro" id="IPR000242">
    <property type="entry name" value="PTP_cat"/>
</dbReference>
<dbReference type="InterPro" id="IPR041783">
    <property type="entry name" value="PTPN3/4_FERM_C"/>
</dbReference>
<dbReference type="InterPro" id="IPR016130">
    <property type="entry name" value="Tyr_Pase_AS"/>
</dbReference>
<dbReference type="InterPro" id="IPR003595">
    <property type="entry name" value="Tyr_Pase_cat"/>
</dbReference>
<dbReference type="InterPro" id="IPR000387">
    <property type="entry name" value="Tyr_Pase_dom"/>
</dbReference>
<dbReference type="InterPro" id="IPR012151">
    <property type="entry name" value="Tyr_Pase_non-rcpt_typ-3/4"/>
</dbReference>
<dbReference type="InterPro" id="IPR029071">
    <property type="entry name" value="Ubiquitin-like_domsf"/>
</dbReference>
<dbReference type="PANTHER" id="PTHR45706">
    <property type="entry name" value="TYROSINE-PROTEIN PHOSPHATASE"/>
    <property type="match status" value="1"/>
</dbReference>
<dbReference type="PANTHER" id="PTHR45706:SF7">
    <property type="entry name" value="TYROSINE-PROTEIN PHOSPHATASE NON-RECEPTOR TYPE 4"/>
    <property type="match status" value="1"/>
</dbReference>
<dbReference type="Pfam" id="PF08736">
    <property type="entry name" value="FA"/>
    <property type="match status" value="1"/>
</dbReference>
<dbReference type="Pfam" id="PF09380">
    <property type="entry name" value="FERM_C"/>
    <property type="match status" value="1"/>
</dbReference>
<dbReference type="Pfam" id="PF00373">
    <property type="entry name" value="FERM_M"/>
    <property type="match status" value="1"/>
</dbReference>
<dbReference type="Pfam" id="PF09379">
    <property type="entry name" value="FERM_N"/>
    <property type="match status" value="1"/>
</dbReference>
<dbReference type="Pfam" id="PF00595">
    <property type="entry name" value="PDZ"/>
    <property type="match status" value="1"/>
</dbReference>
<dbReference type="Pfam" id="PF00102">
    <property type="entry name" value="Y_phosphatase"/>
    <property type="match status" value="1"/>
</dbReference>
<dbReference type="PIRSF" id="PIRSF000927">
    <property type="entry name" value="Tyr-Ptase_nr3"/>
    <property type="match status" value="1"/>
</dbReference>
<dbReference type="PRINTS" id="PR00935">
    <property type="entry name" value="BAND41"/>
</dbReference>
<dbReference type="PRINTS" id="PR00700">
    <property type="entry name" value="PRTYPHPHTASE"/>
</dbReference>
<dbReference type="SMART" id="SM00295">
    <property type="entry name" value="B41"/>
    <property type="match status" value="1"/>
</dbReference>
<dbReference type="SMART" id="SM01195">
    <property type="entry name" value="FA"/>
    <property type="match status" value="1"/>
</dbReference>
<dbReference type="SMART" id="SM01196">
    <property type="entry name" value="FERM_C"/>
    <property type="match status" value="1"/>
</dbReference>
<dbReference type="SMART" id="SM00228">
    <property type="entry name" value="PDZ"/>
    <property type="match status" value="1"/>
</dbReference>
<dbReference type="SMART" id="SM00194">
    <property type="entry name" value="PTPc"/>
    <property type="match status" value="1"/>
</dbReference>
<dbReference type="SMART" id="SM00404">
    <property type="entry name" value="PTPc_motif"/>
    <property type="match status" value="1"/>
</dbReference>
<dbReference type="SUPFAM" id="SSF52799">
    <property type="entry name" value="(Phosphotyrosine protein) phosphatases II"/>
    <property type="match status" value="1"/>
</dbReference>
<dbReference type="SUPFAM" id="SSF50156">
    <property type="entry name" value="PDZ domain-like"/>
    <property type="match status" value="1"/>
</dbReference>
<dbReference type="SUPFAM" id="SSF50729">
    <property type="entry name" value="PH domain-like"/>
    <property type="match status" value="1"/>
</dbReference>
<dbReference type="SUPFAM" id="SSF47031">
    <property type="entry name" value="Second domain of FERM"/>
    <property type="match status" value="1"/>
</dbReference>
<dbReference type="SUPFAM" id="SSF54236">
    <property type="entry name" value="Ubiquitin-like"/>
    <property type="match status" value="1"/>
</dbReference>
<dbReference type="PROSITE" id="PS00660">
    <property type="entry name" value="FERM_1"/>
    <property type="match status" value="1"/>
</dbReference>
<dbReference type="PROSITE" id="PS00661">
    <property type="entry name" value="FERM_2"/>
    <property type="match status" value="1"/>
</dbReference>
<dbReference type="PROSITE" id="PS50057">
    <property type="entry name" value="FERM_3"/>
    <property type="match status" value="1"/>
</dbReference>
<dbReference type="PROSITE" id="PS50106">
    <property type="entry name" value="PDZ"/>
    <property type="match status" value="1"/>
</dbReference>
<dbReference type="PROSITE" id="PS00383">
    <property type="entry name" value="TYR_PHOSPHATASE_1"/>
    <property type="match status" value="1"/>
</dbReference>
<dbReference type="PROSITE" id="PS50056">
    <property type="entry name" value="TYR_PHOSPHATASE_2"/>
    <property type="match status" value="1"/>
</dbReference>
<dbReference type="PROSITE" id="PS50055">
    <property type="entry name" value="TYR_PHOSPHATASE_PTP"/>
    <property type="match status" value="1"/>
</dbReference>
<sequence>MTARFRLPAGRTYNVRASELARDRQHTEVVCNILLLDNTVQAFRVNKHDQGQVLLDIVFKHLDLTERDYFGLQLADDSTDNPRWLDPNKPIRKQLKRGSPYNLNFRVKFFVSDPNKLQEEYTRYQYFLQIKQDILTGRLSCPCNTAALLASFAVQSELGDYNQSENLAGYLSDYSFIPNQPQDFEKEIAKLHQQHVGLSPAEAEFNYLNAARTLELYGVEFHYARDQSNNEILIGVMSGGILIYKNRVRMNTFLWLKIVKISFKCKQFFIQLRKELHESRETLLGFNMVNYRACKTLWKACVEHHTFFRLDRPLPPQKNFFAHYFTLGSKFRYCGRTEVQSVQYGKEKANKDRVFARSPSKPLARKLMDWEVVSRNSLSDDRLETQSLPSRSPPGTPNHRNSSFTQEATRVRPSSVGHLVDHVVHMSPSEDFVSQRSPSSTQANSIVLESSPSQETPEDGQPPALPPKQSKKNSWNQIHFSNSQQDLVTHTNESFDVPSSPEKSTPNGGIPHDNLVLIKMKPDENGRFGFNVKGGYDQKMPVIVSRVAPGTPADLCVPRLNEGDQVVLINGRDIAEHTHDQVVLFIKASCEKHSGELVLLVRPNAVYDVVEEKLESEPDFQYIPEKAPLDSVHQDDHSLRESMIQLAEGLITGTVLAQFDQLYRKKPGMTMSCAKLPQNISKNRYRDISPYDATRVLLKGNEDYINANYINMEIPSSSIINQYIACQGPLPHTCKDFWQMTWEQGSSMVVMLTTQVERGRVKCHQYWPEPSESSSYGCYQVTCHSEEGNPAYIFRKMTLFNQEKNESRQLTQIQYTAWPDHGVPDDSSDFLDFVCHVRDQRAGKEEPIIVHCSAGIGRTGVLITMETAMCLIECNQPVYPLDIVRTMRDQRAMMIQTPSQYRFVCEAILKVYEEGFVKPLTTSSNK</sequence>
<accession>Q9WU22</accession>
<accession>G5E8E7</accession>
<feature type="chain" id="PRO_0000320075" description="Tyrosine-protein phosphatase non-receptor type 4">
    <location>
        <begin position="1"/>
        <end position="926"/>
    </location>
</feature>
<feature type="domain" description="FERM" evidence="3">
    <location>
        <begin position="29"/>
        <end position="312"/>
    </location>
</feature>
<feature type="domain" description="PDZ" evidence="4">
    <location>
        <begin position="517"/>
        <end position="589"/>
    </location>
</feature>
<feature type="domain" description="Tyrosine-protein phosphatase" evidence="5">
    <location>
        <begin position="655"/>
        <end position="911"/>
    </location>
</feature>
<feature type="region of interest" description="Disordered" evidence="7">
    <location>
        <begin position="379"/>
        <end position="412"/>
    </location>
</feature>
<feature type="region of interest" description="Disordered" evidence="7">
    <location>
        <begin position="429"/>
        <end position="474"/>
    </location>
</feature>
<feature type="region of interest" description="Disordered" evidence="7">
    <location>
        <begin position="492"/>
        <end position="511"/>
    </location>
</feature>
<feature type="compositionally biased region" description="Polar residues" evidence="7">
    <location>
        <begin position="398"/>
        <end position="408"/>
    </location>
</feature>
<feature type="compositionally biased region" description="Polar residues" evidence="7">
    <location>
        <begin position="432"/>
        <end position="455"/>
    </location>
</feature>
<feature type="active site" description="Phosphocysteine intermediate" evidence="5 6">
    <location>
        <position position="852"/>
    </location>
</feature>
<feature type="binding site" evidence="1">
    <location>
        <position position="820"/>
    </location>
    <ligand>
        <name>substrate</name>
    </ligand>
</feature>
<feature type="binding site" evidence="1">
    <location>
        <begin position="852"/>
        <end position="858"/>
    </location>
    <ligand>
        <name>substrate</name>
    </ligand>
</feature>
<feature type="binding site" evidence="1">
    <location>
        <position position="896"/>
    </location>
    <ligand>
        <name>substrate</name>
    </ligand>
</feature>
<feature type="modified residue" description="Phosphoserine" evidence="13">
    <location>
        <position position="474"/>
    </location>
</feature>
<feature type="sequence conflict" description="In Ref. 1; AAD22773." evidence="12" ref="1">
    <original>D</original>
    <variation>G</variation>
    <location>
        <position position="311"/>
    </location>
</feature>
<feature type="sequence conflict" description="In Ref. 1; AAD22773." evidence="12" ref="1">
    <original>P</original>
    <variation>S</variation>
    <location>
        <position position="359"/>
    </location>
</feature>
<feature type="sequence conflict" description="In Ref. 1; AAD22773." evidence="12" ref="1">
    <original>T</original>
    <variation>I</variation>
    <location>
        <position position="741"/>
    </location>
</feature>
<feature type="sequence conflict" description="In Ref. 1; AAD22773." evidence="12" ref="1">
    <original>V</original>
    <variation>A</variation>
    <location>
        <position position="781"/>
    </location>
</feature>
<feature type="sequence conflict" description="In Ref. 1; AAD22773." evidence="12" ref="1">
    <original>F</original>
    <variation>I</variation>
    <location>
        <position position="800"/>
    </location>
</feature>
<gene>
    <name type="primary">Ptpn4</name>
</gene>
<proteinExistence type="evidence at protein level"/>
<organism>
    <name type="scientific">Mus musculus</name>
    <name type="common">Mouse</name>
    <dbReference type="NCBI Taxonomy" id="10090"/>
    <lineage>
        <taxon>Eukaryota</taxon>
        <taxon>Metazoa</taxon>
        <taxon>Chordata</taxon>
        <taxon>Craniata</taxon>
        <taxon>Vertebrata</taxon>
        <taxon>Euteleostomi</taxon>
        <taxon>Mammalia</taxon>
        <taxon>Eutheria</taxon>
        <taxon>Euarchontoglires</taxon>
        <taxon>Glires</taxon>
        <taxon>Rodentia</taxon>
        <taxon>Myomorpha</taxon>
        <taxon>Muroidea</taxon>
        <taxon>Muridae</taxon>
        <taxon>Murinae</taxon>
        <taxon>Mus</taxon>
        <taxon>Mus</taxon>
    </lineage>
</organism>